<feature type="chain" id="PRO_0000307521" description="Triosephosphate isomerase">
    <location>
        <begin position="1"/>
        <end position="251"/>
    </location>
</feature>
<feature type="active site" description="Electrophile" evidence="1">
    <location>
        <position position="95"/>
    </location>
</feature>
<feature type="active site" description="Proton acceptor" evidence="1">
    <location>
        <position position="167"/>
    </location>
</feature>
<feature type="binding site" evidence="1">
    <location>
        <begin position="9"/>
        <end position="11"/>
    </location>
    <ligand>
        <name>substrate</name>
    </ligand>
</feature>
<feature type="binding site" evidence="1">
    <location>
        <position position="173"/>
    </location>
    <ligand>
        <name>substrate</name>
    </ligand>
</feature>
<feature type="binding site" evidence="1">
    <location>
        <position position="213"/>
    </location>
    <ligand>
        <name>substrate</name>
    </ligand>
</feature>
<feature type="binding site" evidence="1">
    <location>
        <begin position="234"/>
        <end position="235"/>
    </location>
    <ligand>
        <name>substrate</name>
    </ligand>
</feature>
<name>TPIS_PELPD</name>
<sequence length="251" mass="26762">MRTPLIAGNWKLHKTIAESLAMVDELKPLVAGSRGVEIVVAPVFTALKSVSFALNGSDIGLAAQDCFWEEQGAFTGEVSPAQLRDAGCSHVIIGHSERRQLFGETDEGVNRKARAAVAVGLTAIICVGETMEERESRATFTVVGRQVTAALAGFLSHEFSRIVIAYEPVWAIGTGKTATDQQAQEVHCYIRNLVTMSISQAIADSLRILYGGSVKPDNIRGLMAQPDIDGALIGGASLKAASFAEMVNFRG</sequence>
<keyword id="KW-0963">Cytoplasm</keyword>
<keyword id="KW-0312">Gluconeogenesis</keyword>
<keyword id="KW-0324">Glycolysis</keyword>
<keyword id="KW-0413">Isomerase</keyword>
<keyword id="KW-1185">Reference proteome</keyword>
<protein>
    <recommendedName>
        <fullName evidence="1">Triosephosphate isomerase</fullName>
        <shortName evidence="1">TIM</shortName>
        <shortName evidence="1">TPI</shortName>
        <ecNumber evidence="1">5.3.1.1</ecNumber>
    </recommendedName>
    <alternativeName>
        <fullName evidence="1">Triose-phosphate isomerase</fullName>
    </alternativeName>
</protein>
<accession>A1APN8</accession>
<reference key="1">
    <citation type="submission" date="2006-10" db="EMBL/GenBank/DDBJ databases">
        <title>Complete sequence of chromosome of Pelobacter propionicus DSM 2379.</title>
        <authorList>
            <consortium name="US DOE Joint Genome Institute"/>
            <person name="Copeland A."/>
            <person name="Lucas S."/>
            <person name="Lapidus A."/>
            <person name="Barry K."/>
            <person name="Detter J.C."/>
            <person name="Glavina del Rio T."/>
            <person name="Hammon N."/>
            <person name="Israni S."/>
            <person name="Dalin E."/>
            <person name="Tice H."/>
            <person name="Pitluck S."/>
            <person name="Saunders E."/>
            <person name="Brettin T."/>
            <person name="Bruce D."/>
            <person name="Han C."/>
            <person name="Tapia R."/>
            <person name="Schmutz J."/>
            <person name="Larimer F."/>
            <person name="Land M."/>
            <person name="Hauser L."/>
            <person name="Kyrpides N."/>
            <person name="Kim E."/>
            <person name="Lovley D."/>
            <person name="Richardson P."/>
        </authorList>
    </citation>
    <scope>NUCLEOTIDE SEQUENCE [LARGE SCALE GENOMIC DNA]</scope>
    <source>
        <strain>DSM 2379 / NBRC 103807 / OttBd1</strain>
    </source>
</reference>
<evidence type="ECO:0000255" key="1">
    <source>
        <dbReference type="HAMAP-Rule" id="MF_00147"/>
    </source>
</evidence>
<comment type="function">
    <text evidence="1">Involved in the gluconeogenesis. Catalyzes stereospecifically the conversion of dihydroxyacetone phosphate (DHAP) to D-glyceraldehyde-3-phosphate (G3P).</text>
</comment>
<comment type="catalytic activity">
    <reaction evidence="1">
        <text>D-glyceraldehyde 3-phosphate = dihydroxyacetone phosphate</text>
        <dbReference type="Rhea" id="RHEA:18585"/>
        <dbReference type="ChEBI" id="CHEBI:57642"/>
        <dbReference type="ChEBI" id="CHEBI:59776"/>
        <dbReference type="EC" id="5.3.1.1"/>
    </reaction>
</comment>
<comment type="pathway">
    <text evidence="1">Carbohydrate biosynthesis; gluconeogenesis.</text>
</comment>
<comment type="pathway">
    <text evidence="1">Carbohydrate degradation; glycolysis; D-glyceraldehyde 3-phosphate from glycerone phosphate: step 1/1.</text>
</comment>
<comment type="subunit">
    <text evidence="1">Homodimer.</text>
</comment>
<comment type="subcellular location">
    <subcellularLocation>
        <location evidence="1">Cytoplasm</location>
    </subcellularLocation>
</comment>
<comment type="similarity">
    <text evidence="1">Belongs to the triosephosphate isomerase family.</text>
</comment>
<organism>
    <name type="scientific">Pelobacter propionicus (strain DSM 2379 / NBRC 103807 / OttBd1)</name>
    <dbReference type="NCBI Taxonomy" id="338966"/>
    <lineage>
        <taxon>Bacteria</taxon>
        <taxon>Pseudomonadati</taxon>
        <taxon>Thermodesulfobacteriota</taxon>
        <taxon>Desulfuromonadia</taxon>
        <taxon>Desulfuromonadales</taxon>
        <taxon>Desulfuromonadaceae</taxon>
        <taxon>Pelobacter</taxon>
    </lineage>
</organism>
<dbReference type="EC" id="5.3.1.1" evidence="1"/>
<dbReference type="EMBL" id="CP000482">
    <property type="protein sequence ID" value="ABK99308.1"/>
    <property type="molecule type" value="Genomic_DNA"/>
</dbReference>
<dbReference type="RefSeq" id="WP_011735585.1">
    <property type="nucleotide sequence ID" value="NC_008609.1"/>
</dbReference>
<dbReference type="SMR" id="A1APN8"/>
<dbReference type="STRING" id="338966.Ppro_1695"/>
<dbReference type="KEGG" id="ppd:Ppro_1695"/>
<dbReference type="eggNOG" id="COG0149">
    <property type="taxonomic scope" value="Bacteria"/>
</dbReference>
<dbReference type="HOGENOM" id="CLU_024251_2_3_7"/>
<dbReference type="OrthoDB" id="9809429at2"/>
<dbReference type="UniPathway" id="UPA00109">
    <property type="reaction ID" value="UER00189"/>
</dbReference>
<dbReference type="UniPathway" id="UPA00138"/>
<dbReference type="Proteomes" id="UP000006732">
    <property type="component" value="Chromosome"/>
</dbReference>
<dbReference type="GO" id="GO:0005829">
    <property type="term" value="C:cytosol"/>
    <property type="evidence" value="ECO:0007669"/>
    <property type="project" value="TreeGrafter"/>
</dbReference>
<dbReference type="GO" id="GO:0004807">
    <property type="term" value="F:triose-phosphate isomerase activity"/>
    <property type="evidence" value="ECO:0007669"/>
    <property type="project" value="UniProtKB-UniRule"/>
</dbReference>
<dbReference type="GO" id="GO:0006094">
    <property type="term" value="P:gluconeogenesis"/>
    <property type="evidence" value="ECO:0007669"/>
    <property type="project" value="UniProtKB-UniRule"/>
</dbReference>
<dbReference type="GO" id="GO:0046166">
    <property type="term" value="P:glyceraldehyde-3-phosphate biosynthetic process"/>
    <property type="evidence" value="ECO:0007669"/>
    <property type="project" value="TreeGrafter"/>
</dbReference>
<dbReference type="GO" id="GO:0019563">
    <property type="term" value="P:glycerol catabolic process"/>
    <property type="evidence" value="ECO:0007669"/>
    <property type="project" value="TreeGrafter"/>
</dbReference>
<dbReference type="GO" id="GO:0006096">
    <property type="term" value="P:glycolytic process"/>
    <property type="evidence" value="ECO:0007669"/>
    <property type="project" value="UniProtKB-UniRule"/>
</dbReference>
<dbReference type="CDD" id="cd00311">
    <property type="entry name" value="TIM"/>
    <property type="match status" value="1"/>
</dbReference>
<dbReference type="FunFam" id="3.20.20.70:FF:000016">
    <property type="entry name" value="Triosephosphate isomerase"/>
    <property type="match status" value="1"/>
</dbReference>
<dbReference type="Gene3D" id="3.20.20.70">
    <property type="entry name" value="Aldolase class I"/>
    <property type="match status" value="1"/>
</dbReference>
<dbReference type="HAMAP" id="MF_00147_B">
    <property type="entry name" value="TIM_B"/>
    <property type="match status" value="1"/>
</dbReference>
<dbReference type="InterPro" id="IPR013785">
    <property type="entry name" value="Aldolase_TIM"/>
</dbReference>
<dbReference type="InterPro" id="IPR035990">
    <property type="entry name" value="TIM_sf"/>
</dbReference>
<dbReference type="InterPro" id="IPR022896">
    <property type="entry name" value="TrioseP_Isoase_bac/euk"/>
</dbReference>
<dbReference type="InterPro" id="IPR000652">
    <property type="entry name" value="Triosephosphate_isomerase"/>
</dbReference>
<dbReference type="InterPro" id="IPR020861">
    <property type="entry name" value="Triosephosphate_isomerase_AS"/>
</dbReference>
<dbReference type="NCBIfam" id="TIGR00419">
    <property type="entry name" value="tim"/>
    <property type="match status" value="1"/>
</dbReference>
<dbReference type="PANTHER" id="PTHR21139">
    <property type="entry name" value="TRIOSEPHOSPHATE ISOMERASE"/>
    <property type="match status" value="1"/>
</dbReference>
<dbReference type="PANTHER" id="PTHR21139:SF42">
    <property type="entry name" value="TRIOSEPHOSPHATE ISOMERASE"/>
    <property type="match status" value="1"/>
</dbReference>
<dbReference type="Pfam" id="PF00121">
    <property type="entry name" value="TIM"/>
    <property type="match status" value="1"/>
</dbReference>
<dbReference type="SUPFAM" id="SSF51351">
    <property type="entry name" value="Triosephosphate isomerase (TIM)"/>
    <property type="match status" value="1"/>
</dbReference>
<dbReference type="PROSITE" id="PS00171">
    <property type="entry name" value="TIM_1"/>
    <property type="match status" value="1"/>
</dbReference>
<dbReference type="PROSITE" id="PS51440">
    <property type="entry name" value="TIM_2"/>
    <property type="match status" value="1"/>
</dbReference>
<gene>
    <name evidence="1" type="primary">tpiA</name>
    <name type="ordered locus">Ppro_1695</name>
</gene>
<proteinExistence type="inferred from homology"/>